<proteinExistence type="inferred from homology"/>
<comment type="function">
    <text>Probable b-type cytochrome.</text>
</comment>
<comment type="subcellular location">
    <subcellularLocation>
        <location>Cell membrane</location>
        <topology>Multi-pass membrane protein</topology>
    </subcellularLocation>
</comment>
<comment type="similarity">
    <text evidence="2">Belongs to the HupC/HyaC/HydC family.</text>
</comment>
<organism>
    <name type="scientific">Azotobacter chroococcum mcd 1</name>
    <dbReference type="NCBI Taxonomy" id="355"/>
    <lineage>
        <taxon>Bacteria</taxon>
        <taxon>Pseudomonadati</taxon>
        <taxon>Pseudomonadota</taxon>
        <taxon>Gammaproteobacteria</taxon>
        <taxon>Pseudomonadales</taxon>
        <taxon>Pseudomonadaceae</taxon>
        <taxon>Azotobacter</taxon>
    </lineage>
</organism>
<reference key="1">
    <citation type="journal article" date="1994" name="J. Mol. Biol.">
        <title>Sequences, organization and analysis of the hupZMNOQRTV genes from the Azotobacter chroococcum hydrogenase gene cluster.</title>
        <authorList>
            <person name="Du L."/>
            <person name="Tibelius K.H."/>
            <person name="Souza E.M."/>
            <person name="Garg R.P."/>
            <person name="Yates M.G."/>
        </authorList>
    </citation>
    <scope>NUCLEOTIDE SEQUENCE [GENOMIC DNA]</scope>
</reference>
<name>CYBH_AZOCH</name>
<keyword id="KW-1003">Cell membrane</keyword>
<keyword id="KW-0249">Electron transport</keyword>
<keyword id="KW-0349">Heme</keyword>
<keyword id="KW-0408">Iron</keyword>
<keyword id="KW-0472">Membrane</keyword>
<keyword id="KW-0479">Metal-binding</keyword>
<keyword id="KW-0812">Transmembrane</keyword>
<keyword id="KW-1133">Transmembrane helix</keyword>
<keyword id="KW-0813">Transport</keyword>
<sequence>MALEKSLETGDGQEKVRKQTAVYVYEAPLRLWHWVTALSIVVLGVTGYFIGAPLPTMPGEAMDNYLMGYIRFAHFAAGYVLAIGFLGRVYWAFVGNHHARELFLVPVHRKAWWKELWHEVRWYLFLEKVPKKYIGHNPLGQLAMFCFFVIGAVFMSVTGFALYAEGLGQGSWADRLFGWVIPLFGQSQDVHTWHHLGMWYLVVFVMIHVYLAAREDIVSRQSLISTMVGGWRMFKDDRPD</sequence>
<dbReference type="EMBL" id="L25315">
    <property type="protein sequence ID" value="AAA64447.1"/>
    <property type="molecule type" value="Genomic_DNA"/>
</dbReference>
<dbReference type="PIR" id="S53656">
    <property type="entry name" value="S53656"/>
</dbReference>
<dbReference type="SMR" id="Q43953"/>
<dbReference type="GO" id="GO:0005886">
    <property type="term" value="C:plasma membrane"/>
    <property type="evidence" value="ECO:0007669"/>
    <property type="project" value="UniProtKB-SubCell"/>
</dbReference>
<dbReference type="GO" id="GO:0009055">
    <property type="term" value="F:electron transfer activity"/>
    <property type="evidence" value="ECO:0007669"/>
    <property type="project" value="InterPro"/>
</dbReference>
<dbReference type="GO" id="GO:0020037">
    <property type="term" value="F:heme binding"/>
    <property type="evidence" value="ECO:0007669"/>
    <property type="project" value="TreeGrafter"/>
</dbReference>
<dbReference type="GO" id="GO:0005506">
    <property type="term" value="F:iron ion binding"/>
    <property type="evidence" value="ECO:0007669"/>
    <property type="project" value="InterPro"/>
</dbReference>
<dbReference type="GO" id="GO:0022904">
    <property type="term" value="P:respiratory electron transport chain"/>
    <property type="evidence" value="ECO:0007669"/>
    <property type="project" value="InterPro"/>
</dbReference>
<dbReference type="FunFam" id="1.20.950.20:FF:000003">
    <property type="entry name" value="Ni/Fe-hydrogenase 1 b-type cytochrome subunit"/>
    <property type="match status" value="1"/>
</dbReference>
<dbReference type="Gene3D" id="1.20.950.20">
    <property type="entry name" value="Transmembrane di-heme cytochromes, Chain C"/>
    <property type="match status" value="1"/>
</dbReference>
<dbReference type="InterPro" id="IPR011577">
    <property type="entry name" value="Cyt_b561_bac/Ni-Hgenase"/>
</dbReference>
<dbReference type="InterPro" id="IPR016174">
    <property type="entry name" value="Di-haem_cyt_TM"/>
</dbReference>
<dbReference type="InterPro" id="IPR051542">
    <property type="entry name" value="Hydrogenase_cytochrome"/>
</dbReference>
<dbReference type="InterPro" id="IPR000516">
    <property type="entry name" value="Ni-dep_Hydgase_cyt-B"/>
</dbReference>
<dbReference type="NCBIfam" id="TIGR02125">
    <property type="entry name" value="CytB-hydogenase"/>
    <property type="match status" value="1"/>
</dbReference>
<dbReference type="PANTHER" id="PTHR30485">
    <property type="entry name" value="NI/FE-HYDROGENASE 1 B-TYPE CYTOCHROME SUBUNIT"/>
    <property type="match status" value="1"/>
</dbReference>
<dbReference type="PANTHER" id="PTHR30485:SF0">
    <property type="entry name" value="NI_FE-HYDROGENASE 1 B-TYPE CYTOCHROME SUBUNIT-RELATED"/>
    <property type="match status" value="1"/>
</dbReference>
<dbReference type="Pfam" id="PF01292">
    <property type="entry name" value="Ni_hydr_CYTB"/>
    <property type="match status" value="1"/>
</dbReference>
<dbReference type="PRINTS" id="PR00161">
    <property type="entry name" value="NIHGNASECYTB"/>
</dbReference>
<dbReference type="SUPFAM" id="SSF81342">
    <property type="entry name" value="Transmembrane di-heme cytochromes"/>
    <property type="match status" value="1"/>
</dbReference>
<dbReference type="PROSITE" id="PS00882">
    <property type="entry name" value="NI_HGENASE_CYTB_1"/>
    <property type="match status" value="1"/>
</dbReference>
<dbReference type="PROSITE" id="PS00883">
    <property type="entry name" value="NI_HGENASE_CYTB_2"/>
    <property type="match status" value="1"/>
</dbReference>
<feature type="chain" id="PRO_0000201379" description="Probable Ni/Fe-hydrogenase B-type cytochrome subunit">
    <location>
        <begin position="1"/>
        <end position="240"/>
    </location>
</feature>
<feature type="transmembrane region" description="Helical" evidence="1">
    <location>
        <begin position="31"/>
        <end position="51"/>
    </location>
</feature>
<feature type="transmembrane region" description="Helical" evidence="1">
    <location>
        <begin position="75"/>
        <end position="95"/>
    </location>
</feature>
<feature type="transmembrane region" description="Helical" evidence="1">
    <location>
        <begin position="142"/>
        <end position="163"/>
    </location>
</feature>
<feature type="transmembrane region" description="Helical" evidence="1">
    <location>
        <begin position="196"/>
        <end position="213"/>
    </location>
</feature>
<evidence type="ECO:0000255" key="1"/>
<evidence type="ECO:0000305" key="2"/>
<protein>
    <recommendedName>
        <fullName>Probable Ni/Fe-hydrogenase B-type cytochrome subunit</fullName>
    </recommendedName>
</protein>
<accession>Q43953</accession>
<gene>
    <name type="primary">hupZ</name>
</gene>